<gene>
    <name evidence="1" type="primary">der</name>
    <name type="synonym">engA</name>
    <name type="ordered locus">Pnuc_1287</name>
</gene>
<evidence type="ECO:0000255" key="1">
    <source>
        <dbReference type="HAMAP-Rule" id="MF_00195"/>
    </source>
</evidence>
<dbReference type="EMBL" id="CP000655">
    <property type="protein sequence ID" value="ABP34501.1"/>
    <property type="molecule type" value="Genomic_DNA"/>
</dbReference>
<dbReference type="RefSeq" id="WP_011903126.1">
    <property type="nucleotide sequence ID" value="NC_009379.1"/>
</dbReference>
<dbReference type="SMR" id="A4SYD7"/>
<dbReference type="GeneID" id="31481675"/>
<dbReference type="KEGG" id="pnu:Pnuc_1287"/>
<dbReference type="eggNOG" id="COG1160">
    <property type="taxonomic scope" value="Bacteria"/>
</dbReference>
<dbReference type="HOGENOM" id="CLU_016077_6_2_4"/>
<dbReference type="Proteomes" id="UP000000231">
    <property type="component" value="Chromosome"/>
</dbReference>
<dbReference type="GO" id="GO:0005525">
    <property type="term" value="F:GTP binding"/>
    <property type="evidence" value="ECO:0007669"/>
    <property type="project" value="UniProtKB-UniRule"/>
</dbReference>
<dbReference type="GO" id="GO:0043022">
    <property type="term" value="F:ribosome binding"/>
    <property type="evidence" value="ECO:0007669"/>
    <property type="project" value="TreeGrafter"/>
</dbReference>
<dbReference type="GO" id="GO:0042254">
    <property type="term" value="P:ribosome biogenesis"/>
    <property type="evidence" value="ECO:0007669"/>
    <property type="project" value="UniProtKB-KW"/>
</dbReference>
<dbReference type="CDD" id="cd01894">
    <property type="entry name" value="EngA1"/>
    <property type="match status" value="1"/>
</dbReference>
<dbReference type="CDD" id="cd01895">
    <property type="entry name" value="EngA2"/>
    <property type="match status" value="1"/>
</dbReference>
<dbReference type="FunFam" id="3.30.300.20:FF:000004">
    <property type="entry name" value="GTPase Der"/>
    <property type="match status" value="1"/>
</dbReference>
<dbReference type="FunFam" id="3.40.50.300:FF:000040">
    <property type="entry name" value="GTPase Der"/>
    <property type="match status" value="1"/>
</dbReference>
<dbReference type="FunFam" id="3.40.50.300:FF:000057">
    <property type="entry name" value="GTPase Der"/>
    <property type="match status" value="1"/>
</dbReference>
<dbReference type="Gene3D" id="3.30.300.20">
    <property type="match status" value="1"/>
</dbReference>
<dbReference type="Gene3D" id="3.40.50.300">
    <property type="entry name" value="P-loop containing nucleotide triphosphate hydrolases"/>
    <property type="match status" value="2"/>
</dbReference>
<dbReference type="HAMAP" id="MF_00195">
    <property type="entry name" value="GTPase_Der"/>
    <property type="match status" value="1"/>
</dbReference>
<dbReference type="InterPro" id="IPR031166">
    <property type="entry name" value="G_ENGA"/>
</dbReference>
<dbReference type="InterPro" id="IPR006073">
    <property type="entry name" value="GTP-bd"/>
</dbReference>
<dbReference type="InterPro" id="IPR016484">
    <property type="entry name" value="GTPase_Der"/>
</dbReference>
<dbReference type="InterPro" id="IPR032859">
    <property type="entry name" value="KH_dom-like"/>
</dbReference>
<dbReference type="InterPro" id="IPR015946">
    <property type="entry name" value="KH_dom-like_a/b"/>
</dbReference>
<dbReference type="InterPro" id="IPR027417">
    <property type="entry name" value="P-loop_NTPase"/>
</dbReference>
<dbReference type="InterPro" id="IPR005225">
    <property type="entry name" value="Small_GTP-bd"/>
</dbReference>
<dbReference type="NCBIfam" id="TIGR03594">
    <property type="entry name" value="GTPase_EngA"/>
    <property type="match status" value="1"/>
</dbReference>
<dbReference type="NCBIfam" id="TIGR00231">
    <property type="entry name" value="small_GTP"/>
    <property type="match status" value="2"/>
</dbReference>
<dbReference type="PANTHER" id="PTHR43834">
    <property type="entry name" value="GTPASE DER"/>
    <property type="match status" value="1"/>
</dbReference>
<dbReference type="PANTHER" id="PTHR43834:SF6">
    <property type="entry name" value="GTPASE DER"/>
    <property type="match status" value="1"/>
</dbReference>
<dbReference type="Pfam" id="PF14714">
    <property type="entry name" value="KH_dom-like"/>
    <property type="match status" value="1"/>
</dbReference>
<dbReference type="Pfam" id="PF01926">
    <property type="entry name" value="MMR_HSR1"/>
    <property type="match status" value="2"/>
</dbReference>
<dbReference type="PIRSF" id="PIRSF006485">
    <property type="entry name" value="GTP-binding_EngA"/>
    <property type="match status" value="1"/>
</dbReference>
<dbReference type="PRINTS" id="PR00326">
    <property type="entry name" value="GTP1OBG"/>
</dbReference>
<dbReference type="SUPFAM" id="SSF52540">
    <property type="entry name" value="P-loop containing nucleoside triphosphate hydrolases"/>
    <property type="match status" value="2"/>
</dbReference>
<dbReference type="PROSITE" id="PS51712">
    <property type="entry name" value="G_ENGA"/>
    <property type="match status" value="2"/>
</dbReference>
<comment type="function">
    <text evidence="1">GTPase that plays an essential role in the late steps of ribosome biogenesis.</text>
</comment>
<comment type="subunit">
    <text evidence="1">Associates with the 50S ribosomal subunit.</text>
</comment>
<comment type="similarity">
    <text evidence="1">Belongs to the TRAFAC class TrmE-Era-EngA-EngB-Septin-like GTPase superfamily. EngA (Der) GTPase family.</text>
</comment>
<accession>A4SYD7</accession>
<sequence length="454" mass="49704">MNPVITIVGRPNVGKSTLFNRLTRSRDALVADFSGLTRDRHYGKGRIGERAFICVDTGGFEPVAKTGIVAEMAKQTKQAVAESDIVIFLVDGRLGMAPQDRVIADFLRKTGRPVILAVNKTEGMQSGIVTADFHELGLGEPFPISSAHGDGVKGLIDDALDSLGIAEPDEDELANDPNRPMKIAVVGRPNVGKSTLINKLIGEERVIAFDMPGTTRDAIEVPFERNGKPYILVDTAGLRRRGKVFEAIEKFSVVKTLQAIADCNVVILMLDAQQDISEQDAHIAGFIVEAGRALVVAVNKWDGLDAYVKERARLEIAQKLRFLDFANVHPISAKKGTGLKDLFKDVDAAYAAAMAKLPTPRLTRILQEAIEHQQPKRVGMGRPKLRYAHQGGMNPPIVVIHGTSLSGVTDSYKRYLEGRFRDVFKLRGTPLRIQMNTAKNPYVDADKGKKGKKH</sequence>
<protein>
    <recommendedName>
        <fullName evidence="1">GTPase Der</fullName>
    </recommendedName>
    <alternativeName>
        <fullName evidence="1">GTP-binding protein EngA</fullName>
    </alternativeName>
</protein>
<name>DER_POLAQ</name>
<reference key="1">
    <citation type="journal article" date="2012" name="Stand. Genomic Sci.">
        <title>Complete genome sequence of Polynucleobacter necessarius subsp. asymbioticus type strain (QLW-P1DMWA-1(T)).</title>
        <authorList>
            <person name="Meincke L."/>
            <person name="Copeland A."/>
            <person name="Lapidus A."/>
            <person name="Lucas S."/>
            <person name="Berry K.W."/>
            <person name="Del Rio T.G."/>
            <person name="Hammon N."/>
            <person name="Dalin E."/>
            <person name="Tice H."/>
            <person name="Pitluck S."/>
            <person name="Richardson P."/>
            <person name="Bruce D."/>
            <person name="Goodwin L."/>
            <person name="Han C."/>
            <person name="Tapia R."/>
            <person name="Detter J.C."/>
            <person name="Schmutz J."/>
            <person name="Brettin T."/>
            <person name="Larimer F."/>
            <person name="Land M."/>
            <person name="Hauser L."/>
            <person name="Kyrpides N.C."/>
            <person name="Ivanova N."/>
            <person name="Goker M."/>
            <person name="Woyke T."/>
            <person name="Wu Q.L."/>
            <person name="Pockl M."/>
            <person name="Hahn M.W."/>
            <person name="Klenk H.P."/>
        </authorList>
    </citation>
    <scope>NUCLEOTIDE SEQUENCE [LARGE SCALE GENOMIC DNA]</scope>
    <source>
        <strain>DSM 18221 / CIP 109841 / QLW-P1DMWA-1</strain>
    </source>
</reference>
<organism>
    <name type="scientific">Polynucleobacter asymbioticus (strain DSM 18221 / CIP 109841 / QLW-P1DMWA-1)</name>
    <name type="common">Polynucleobacter necessarius subsp. asymbioticus</name>
    <dbReference type="NCBI Taxonomy" id="312153"/>
    <lineage>
        <taxon>Bacteria</taxon>
        <taxon>Pseudomonadati</taxon>
        <taxon>Pseudomonadota</taxon>
        <taxon>Betaproteobacteria</taxon>
        <taxon>Burkholderiales</taxon>
        <taxon>Burkholderiaceae</taxon>
        <taxon>Polynucleobacter</taxon>
    </lineage>
</organism>
<keyword id="KW-0342">GTP-binding</keyword>
<keyword id="KW-0547">Nucleotide-binding</keyword>
<keyword id="KW-1185">Reference proteome</keyword>
<keyword id="KW-0677">Repeat</keyword>
<keyword id="KW-0690">Ribosome biogenesis</keyword>
<feature type="chain" id="PRO_1000077665" description="GTPase Der">
    <location>
        <begin position="1"/>
        <end position="454"/>
    </location>
</feature>
<feature type="domain" description="EngA-type G 1">
    <location>
        <begin position="3"/>
        <end position="167"/>
    </location>
</feature>
<feature type="domain" description="EngA-type G 2">
    <location>
        <begin position="181"/>
        <end position="354"/>
    </location>
</feature>
<feature type="domain" description="KH-like" evidence="1">
    <location>
        <begin position="355"/>
        <end position="439"/>
    </location>
</feature>
<feature type="binding site" evidence="1">
    <location>
        <begin position="9"/>
        <end position="16"/>
    </location>
    <ligand>
        <name>GTP</name>
        <dbReference type="ChEBI" id="CHEBI:37565"/>
        <label>1</label>
    </ligand>
</feature>
<feature type="binding site" evidence="1">
    <location>
        <begin position="56"/>
        <end position="60"/>
    </location>
    <ligand>
        <name>GTP</name>
        <dbReference type="ChEBI" id="CHEBI:37565"/>
        <label>1</label>
    </ligand>
</feature>
<feature type="binding site" evidence="1">
    <location>
        <begin position="119"/>
        <end position="122"/>
    </location>
    <ligand>
        <name>GTP</name>
        <dbReference type="ChEBI" id="CHEBI:37565"/>
        <label>1</label>
    </ligand>
</feature>
<feature type="binding site" evidence="1">
    <location>
        <begin position="187"/>
        <end position="194"/>
    </location>
    <ligand>
        <name>GTP</name>
        <dbReference type="ChEBI" id="CHEBI:37565"/>
        <label>2</label>
    </ligand>
</feature>
<feature type="binding site" evidence="1">
    <location>
        <begin position="234"/>
        <end position="238"/>
    </location>
    <ligand>
        <name>GTP</name>
        <dbReference type="ChEBI" id="CHEBI:37565"/>
        <label>2</label>
    </ligand>
</feature>
<feature type="binding site" evidence="1">
    <location>
        <begin position="299"/>
        <end position="302"/>
    </location>
    <ligand>
        <name>GTP</name>
        <dbReference type="ChEBI" id="CHEBI:37565"/>
        <label>2</label>
    </ligand>
</feature>
<proteinExistence type="inferred from homology"/>